<proteinExistence type="evidence at protein level"/>
<keyword id="KW-1265">Chloride channel impairing toxin</keyword>
<keyword id="KW-0903">Direct protein sequencing</keyword>
<keyword id="KW-1015">Disulfide bond</keyword>
<keyword id="KW-0872">Ion channel impairing toxin</keyword>
<keyword id="KW-0964">Secreted</keyword>
<keyword id="KW-0800">Toxin</keyword>
<keyword id="KW-0870">Voltage-gated chloride channel impairing toxin</keyword>
<reference key="1">
    <citation type="journal article" date="1997" name="J. Pept. Res.">
        <title>Characterization of a new family of toxin-like peptides from the venom of the scorpion Leiurus quinquestriatus hebraeus. 1H-NMR structure of leiuropeptide II.</title>
        <authorList>
            <person name="Buisine E."/>
            <person name="Wieruszeski J.-M."/>
            <person name="Lippens G."/>
            <person name="Wouters D."/>
            <person name="Tartar A."/>
            <person name="Sautiere P."/>
        </authorList>
    </citation>
    <scope>PROTEIN SEQUENCE</scope>
    <scope>STRUCTURE BY NMR</scope>
    <scope>DISULFIDE BONDS</scope>
    <scope>SUBCELLULAR LOCATION</scope>
    <source>
        <tissue>Venom</tissue>
    </source>
</reference>
<reference key="2">
    <citation type="journal article" date="2009" name="J. Biol. Chem.">
        <title>Isolation and characterization of a high affinity peptide inhibitor of ClC-2 chloride channels.</title>
        <authorList>
            <person name="Thompson C.H."/>
            <person name="Olivetti P.R."/>
            <person name="Fuller M.D."/>
            <person name="Freeman C.S."/>
            <person name="McMaster D."/>
            <person name="French R.J."/>
            <person name="Pohl J."/>
            <person name="Kubanek J."/>
            <person name="McCarty N.A."/>
        </authorList>
    </citation>
    <scope>PROTEIN SEQUENCE</scope>
    <scope>SYNTHESIS</scope>
    <scope>FUNCTION</scope>
    <scope>MASS SPECTROMETRY</scope>
    <source>
        <tissue>Venom</tissue>
    </source>
</reference>
<reference key="3">
    <citation type="journal article" date="2005" name="J. Membr. Biol.">
        <title>Inhibition of ClC-2 chloride channels by a peptide component or components of scorpion venom.</title>
        <authorList>
            <person name="Thompson C.H."/>
            <person name="Fields D.M."/>
            <person name="Olivetti P.R."/>
            <person name="Fuller M.D."/>
            <person name="Zhang Z.R."/>
            <person name="Kubanek J."/>
            <person name="McCarty N.A."/>
        </authorList>
    </citation>
    <scope>FUNCTION</scope>
</reference>
<reference key="4">
    <citation type="journal article" date="2006" name="Toxicon">
        <title>Moving pieces in a taxonomic puzzle: venom 2D-LC/MS and data clustering analyses to infer phylogenetic relationships in some scorpions from the Buthidae family (Scorpiones).</title>
        <authorList>
            <person name="Nascimento D.G."/>
            <person name="Rates B."/>
            <person name="Santos D.M."/>
            <person name="Verano-Braga T."/>
            <person name="Barbosa-Silva A."/>
            <person name="Dutra A.A.A."/>
            <person name="Biondi I."/>
            <person name="Martin-Eauclaire M.-F."/>
            <person name="De Lima M.E."/>
            <person name="Pimenta A.M.C."/>
        </authorList>
    </citation>
    <scope>IDENTIFICATION BY MASS SPECTROMETRY</scope>
</reference>
<protein>
    <recommendedName>
        <fullName evidence="6">Potassium channel toxin alpha-KTx 8.3</fullName>
    </recommendedName>
    <alternativeName>
        <fullName evidence="4">Gating modifier of anion channels 2</fullName>
        <shortName evidence="4">Toxin GaTx2</shortName>
    </alternativeName>
    <alternativeName>
        <fullName evidence="5">Leiuropeptide II</fullName>
        <shortName>LpII</shortName>
    </alternativeName>
    <alternativeName>
        <fullName evidence="6">Leiuropeptide-2</fullName>
    </alternativeName>
</protein>
<accession>P80670</accession>
<sequence length="29" mass="3199">VSCEDCPDHCSTQKARAKCDNDKCVCEPI</sequence>
<organism>
    <name type="scientific">Leiurus hebraeus</name>
    <name type="common">Hebrew deathstalker scorpion</name>
    <name type="synonym">Leiurus quinquestriatus hebraeus</name>
    <dbReference type="NCBI Taxonomy" id="2899558"/>
    <lineage>
        <taxon>Eukaryota</taxon>
        <taxon>Metazoa</taxon>
        <taxon>Ecdysozoa</taxon>
        <taxon>Arthropoda</taxon>
        <taxon>Chelicerata</taxon>
        <taxon>Arachnida</taxon>
        <taxon>Scorpiones</taxon>
        <taxon>Buthida</taxon>
        <taxon>Buthoidea</taxon>
        <taxon>Buthidae</taxon>
        <taxon>Leiurus</taxon>
    </lineage>
</organism>
<name>KAX83_LEIHE</name>
<evidence type="ECO:0000269" key="1">
    <source>
    </source>
</evidence>
<evidence type="ECO:0000269" key="2">
    <source>
    </source>
</evidence>
<evidence type="ECO:0000269" key="3">
    <source>
    </source>
</evidence>
<evidence type="ECO:0000303" key="4">
    <source>
    </source>
</evidence>
<evidence type="ECO:0000303" key="5">
    <source>
    </source>
</evidence>
<evidence type="ECO:0000305" key="6"/>
<evidence type="ECO:0000305" key="7">
    <source>
    </source>
</evidence>
<comment type="function">
    <text evidence="1 2">Specific and potent inhibitor of ClC-2/CLCN2 chloride channel. It slows ClC-2/CLCN2 activation by increasing the latency to first opening by nearly 8-fold but is unable to inhibit open channels, suggesting that this toxin inhibits channel activation gating.</text>
</comment>
<comment type="subcellular location">
    <subcellularLocation>
        <location evidence="3">Secreted</location>
    </subcellularLocation>
</comment>
<comment type="tissue specificity">
    <text evidence="7">Expressed by the venom gland.</text>
</comment>
<comment type="domain">
    <text evidence="3">Has the structural arrangement of an alpha-helix connected to a beta-sheet by disulfide bonds (CSalpha/beta).</text>
</comment>
<comment type="mass spectrometry" mass="3191.29" method="MALDI" evidence="2"/>
<comment type="miscellaneous">
    <text evidence="2">Negative results: does not inhibit ClC-0, ClC-1/CLCN1, ClC-3/CLCN3, ClC-4/CLCN4, CFTR chloride channel, GABRR, calcium-activated chloride channel regulator (Cl(Ca)), Shaker, and Kv1.2/KCNA2.</text>
</comment>
<comment type="similarity">
    <text evidence="3">Belongs to the short scorpion toxin superfamily. Potassium channel inhibitor family. Alpha-KTx 08 subfamily.</text>
</comment>
<comment type="caution">
    <text evidence="6">Has sequence similarities with potassium channel inhibitors, but inhibits chloride channels. It is why the systematic name 'Potassium channel toxin alpha-KTx 8.3' has been moved as alternative name.</text>
</comment>
<feature type="peptide" id="PRO_0000044542" description="Potassium channel toxin alpha-KTx 8.3" evidence="2 3">
    <location>
        <begin position="1"/>
        <end position="29"/>
    </location>
</feature>
<feature type="disulfide bond" evidence="3">
    <location>
        <begin position="3"/>
        <end position="19"/>
    </location>
</feature>
<feature type="disulfide bond" evidence="3">
    <location>
        <begin position="6"/>
        <end position="24"/>
    </location>
</feature>
<feature type="disulfide bond" evidence="3">
    <location>
        <begin position="10"/>
        <end position="26"/>
    </location>
</feature>
<dbReference type="SMR" id="P80670"/>
<dbReference type="GO" id="GO:0005576">
    <property type="term" value="C:extracellular region"/>
    <property type="evidence" value="ECO:0007669"/>
    <property type="project" value="UniProtKB-SubCell"/>
</dbReference>
<dbReference type="GO" id="GO:0017081">
    <property type="term" value="F:chloride channel regulator activity"/>
    <property type="evidence" value="ECO:0007669"/>
    <property type="project" value="UniProtKB-KW"/>
</dbReference>
<dbReference type="GO" id="GO:0008200">
    <property type="term" value="F:ion channel inhibitor activity"/>
    <property type="evidence" value="ECO:0007669"/>
    <property type="project" value="InterPro"/>
</dbReference>
<dbReference type="GO" id="GO:0090729">
    <property type="term" value="F:toxin activity"/>
    <property type="evidence" value="ECO:0007669"/>
    <property type="project" value="UniProtKB-KW"/>
</dbReference>
<dbReference type="InterPro" id="IPR036574">
    <property type="entry name" value="Scorpion_toxin-like_sf"/>
</dbReference>
<dbReference type="InterPro" id="IPR008911">
    <property type="entry name" value="Toxin_alpha-KTx_8/9"/>
</dbReference>
<dbReference type="Pfam" id="PF05453">
    <property type="entry name" value="Toxin_6"/>
    <property type="match status" value="1"/>
</dbReference>
<dbReference type="SUPFAM" id="SSF57095">
    <property type="entry name" value="Scorpion toxin-like"/>
    <property type="match status" value="1"/>
</dbReference>